<dbReference type="EMBL" id="AY363453">
    <property type="protein sequence ID" value="AAR18593.1"/>
    <property type="molecule type" value="Genomic_DNA"/>
</dbReference>
<dbReference type="EMBL" id="AY130989">
    <property type="protein sequence ID" value="AAN10302.1"/>
    <property type="molecule type" value="mRNA"/>
</dbReference>
<dbReference type="EMBL" id="AY258137">
    <property type="protein sequence ID" value="AAP80240.1"/>
    <property type="molecule type" value="Genomic_DNA"/>
</dbReference>
<dbReference type="EMBL" id="EU047750">
    <property type="protein sequence ID" value="ABU23729.1"/>
    <property type="molecule type" value="mRNA"/>
</dbReference>
<dbReference type="EMBL" id="BC162314">
    <property type="protein sequence ID" value="AAI62314.1"/>
    <property type="molecule type" value="mRNA"/>
</dbReference>
<dbReference type="EMBL" id="BC162321">
    <property type="protein sequence ID" value="AAI62321.1"/>
    <property type="molecule type" value="mRNA"/>
</dbReference>
<dbReference type="EMBL" id="BC163916">
    <property type="protein sequence ID" value="AAI63916.1"/>
    <property type="molecule type" value="mRNA"/>
</dbReference>
<dbReference type="RefSeq" id="NP_991146.1">
    <property type="nucleotide sequence ID" value="NM_205583.2"/>
</dbReference>
<dbReference type="RefSeq" id="XP_005170823.1">
    <property type="nucleotide sequence ID" value="XM_005170766.3"/>
</dbReference>
<dbReference type="SMR" id="Q7T273"/>
<dbReference type="STRING" id="7955.ENSDARP00000131567"/>
<dbReference type="PaxDb" id="7955-ENSDARP00000069720"/>
<dbReference type="Ensembl" id="ENSDART00000167332">
    <property type="protein sequence ID" value="ENSDARP00000131567"/>
    <property type="gene ID" value="ENSDARG00000102175"/>
</dbReference>
<dbReference type="GeneID" id="402837"/>
<dbReference type="KEGG" id="dre:402837"/>
<dbReference type="AGR" id="ZFIN:ZDB-GENE-050726-1"/>
<dbReference type="CTD" id="57817"/>
<dbReference type="ZFIN" id="ZDB-GENE-050726-1">
    <property type="gene designation" value="hamp"/>
</dbReference>
<dbReference type="eggNOG" id="ENOG502SA4E">
    <property type="taxonomic scope" value="Eukaryota"/>
</dbReference>
<dbReference type="HOGENOM" id="CLU_2426380_0_0_1"/>
<dbReference type="OMA" id="CICILQT"/>
<dbReference type="OrthoDB" id="9428792at2759"/>
<dbReference type="TreeFam" id="TF330932"/>
<dbReference type="Proteomes" id="UP000000437">
    <property type="component" value="Chromosome 16"/>
</dbReference>
<dbReference type="Bgee" id="ENSDARG00000102175">
    <property type="expression patterns" value="Expressed in spleen and 16 other cell types or tissues"/>
</dbReference>
<dbReference type="ExpressionAtlas" id="Q7T273">
    <property type="expression patterns" value="baseline and differential"/>
</dbReference>
<dbReference type="GO" id="GO:0005576">
    <property type="term" value="C:extracellular region"/>
    <property type="evidence" value="ECO:0007669"/>
    <property type="project" value="UniProtKB-SubCell"/>
</dbReference>
<dbReference type="GO" id="GO:0005179">
    <property type="term" value="F:hormone activity"/>
    <property type="evidence" value="ECO:0007669"/>
    <property type="project" value="UniProtKB-KW"/>
</dbReference>
<dbReference type="GO" id="GO:0001530">
    <property type="term" value="F:lipopolysaccharide binding"/>
    <property type="evidence" value="ECO:0000314"/>
    <property type="project" value="ZFIN"/>
</dbReference>
<dbReference type="GO" id="GO:0070891">
    <property type="term" value="F:lipoteichoic acid binding"/>
    <property type="evidence" value="ECO:0000314"/>
    <property type="project" value="ZFIN"/>
</dbReference>
<dbReference type="GO" id="GO:0042834">
    <property type="term" value="F:peptidoglycan binding"/>
    <property type="evidence" value="ECO:0000314"/>
    <property type="project" value="ZFIN"/>
</dbReference>
<dbReference type="GO" id="GO:0140367">
    <property type="term" value="P:antibacterial innate immune response"/>
    <property type="evidence" value="ECO:0000314"/>
    <property type="project" value="ZFIN"/>
</dbReference>
<dbReference type="GO" id="GO:0071393">
    <property type="term" value="P:cellular response to progesterone stimulus"/>
    <property type="evidence" value="ECO:0000315"/>
    <property type="project" value="ZFIN"/>
</dbReference>
<dbReference type="GO" id="GO:0071383">
    <property type="term" value="P:cellular response to steroid hormone stimulus"/>
    <property type="evidence" value="ECO:0000315"/>
    <property type="project" value="ZFIN"/>
</dbReference>
<dbReference type="GO" id="GO:0042742">
    <property type="term" value="P:defense response to bacterium"/>
    <property type="evidence" value="ECO:0000318"/>
    <property type="project" value="GO_Central"/>
</dbReference>
<dbReference type="GO" id="GO:0050829">
    <property type="term" value="P:defense response to Gram-negative bacterium"/>
    <property type="evidence" value="ECO:0000314"/>
    <property type="project" value="ZFIN"/>
</dbReference>
<dbReference type="GO" id="GO:0050830">
    <property type="term" value="P:defense response to Gram-positive bacterium"/>
    <property type="evidence" value="ECO:0000314"/>
    <property type="project" value="ZFIN"/>
</dbReference>
<dbReference type="GO" id="GO:0006879">
    <property type="term" value="P:intracellular iron ion homeostasis"/>
    <property type="evidence" value="ECO:0007669"/>
    <property type="project" value="InterPro"/>
</dbReference>
<dbReference type="GO" id="GO:0060586">
    <property type="term" value="P:multicellular organismal-level iron ion homeostasis"/>
    <property type="evidence" value="ECO:0000315"/>
    <property type="project" value="ZFIN"/>
</dbReference>
<dbReference type="GO" id="GO:0009617">
    <property type="term" value="P:response to bacterium"/>
    <property type="evidence" value="ECO:0000314"/>
    <property type="project" value="ZFIN"/>
</dbReference>
<dbReference type="InterPro" id="IPR010500">
    <property type="entry name" value="Hepcidin"/>
</dbReference>
<dbReference type="PANTHER" id="PTHR16877">
    <property type="entry name" value="HEPCIDIN"/>
    <property type="match status" value="1"/>
</dbReference>
<dbReference type="PANTHER" id="PTHR16877:SF0">
    <property type="entry name" value="HEPCIDIN"/>
    <property type="match status" value="1"/>
</dbReference>
<dbReference type="Pfam" id="PF06446">
    <property type="entry name" value="Hepcidin"/>
    <property type="match status" value="1"/>
</dbReference>
<feature type="signal peptide" evidence="2">
    <location>
        <begin position="1"/>
        <end position="24"/>
    </location>
</feature>
<feature type="propeptide" id="PRO_0000013389" evidence="2">
    <location>
        <begin position="25"/>
        <end position="64"/>
    </location>
</feature>
<feature type="peptide" id="PRO_0000013390" description="Hepcidin-2">
    <location>
        <begin position="67"/>
        <end position="91"/>
    </location>
</feature>
<feature type="disulfide bond" evidence="1">
    <location>
        <begin position="73"/>
        <end position="89"/>
    </location>
</feature>
<feature type="disulfide bond" evidence="1">
    <location>
        <begin position="76"/>
        <end position="79"/>
    </location>
</feature>
<feature type="disulfide bond" evidence="1">
    <location>
        <begin position="77"/>
        <end position="85"/>
    </location>
</feature>
<feature type="disulfide bond" evidence="1">
    <location>
        <begin position="80"/>
        <end position="88"/>
    </location>
</feature>
<feature type="sequence conflict" description="In Ref. 1; AAR18593." evidence="3" ref="1">
    <original>T</original>
    <variation>A</variation>
    <location>
        <position position="56"/>
    </location>
</feature>
<comment type="function">
    <text evidence="1">Seems to act as a signaling molecule involved in the maintenance of iron homeostasis. Seems to be required in conjunction with HFE to regulate both intestinal iron absorption and iron storage in macrophages. May also have antimicrobial activity (By similarity).</text>
</comment>
<comment type="subcellular location">
    <subcellularLocation>
        <location>Secreted</location>
    </subcellularLocation>
</comment>
<comment type="similarity">
    <text evidence="3">Belongs to the hepcidin family.</text>
</comment>
<organism>
    <name type="scientific">Danio rerio</name>
    <name type="common">Zebrafish</name>
    <name type="synonym">Brachydanio rerio</name>
    <dbReference type="NCBI Taxonomy" id="7955"/>
    <lineage>
        <taxon>Eukaryota</taxon>
        <taxon>Metazoa</taxon>
        <taxon>Chordata</taxon>
        <taxon>Craniata</taxon>
        <taxon>Vertebrata</taxon>
        <taxon>Euteleostomi</taxon>
        <taxon>Actinopterygii</taxon>
        <taxon>Neopterygii</taxon>
        <taxon>Teleostei</taxon>
        <taxon>Ostariophysi</taxon>
        <taxon>Cypriniformes</taxon>
        <taxon>Danionidae</taxon>
        <taxon>Danioninae</taxon>
        <taxon>Danio</taxon>
    </lineage>
</organism>
<keyword id="KW-0044">Antibiotic</keyword>
<keyword id="KW-0929">Antimicrobial</keyword>
<keyword id="KW-0165">Cleavage on pair of basic residues</keyword>
<keyword id="KW-1015">Disulfide bond</keyword>
<keyword id="KW-0372">Hormone</keyword>
<keyword id="KW-1185">Reference proteome</keyword>
<keyword id="KW-0964">Secreted</keyword>
<keyword id="KW-0732">Signal</keyword>
<accession>Q7T273</accession>
<accession>A7UDN3</accession>
<proteinExistence type="inferred from homology"/>
<reference key="1">
    <citation type="journal article" date="2004" name="Dev. Comp. Immunol.">
        <title>Organization and expression analysis of the zebrafish hepcidin gene, an antimicrobial peptide gene conserved among vertebrates.</title>
        <authorList>
            <person name="Shike H."/>
            <person name="Shimizu C."/>
            <person name="Lauth X."/>
            <person name="Burns J.C."/>
        </authorList>
    </citation>
    <scope>NUCLEOTIDE SEQUENCE [GENOMIC DNA]</scope>
</reference>
<reference key="2">
    <citation type="submission" date="2003-03" db="EMBL/GenBank/DDBJ databases">
        <title>Zebrafish hepcidin antimicrobial peptide expressed in the liver and regulated by HNF1.</title>
        <authorList>
            <person name="Gong H.Y."/>
            <person name="Wu J.L."/>
        </authorList>
    </citation>
    <scope>NUCLEOTIDE SEQUENCE [GENOMIC DNA / MRNA]</scope>
    <source>
        <tissue>Liver</tissue>
    </source>
</reference>
<reference key="3">
    <citation type="submission" date="2007-07" db="EMBL/GenBank/DDBJ databases">
        <title>cDNA cloning and expression of antimicrobial peptide hepcidin from Danio rerio.</title>
        <authorList>
            <person name="Jeffy G."/>
            <person name="Sanath K."/>
            <person name="Karunasagar I."/>
            <person name="Karunasagar I."/>
        </authorList>
    </citation>
    <scope>NUCLEOTIDE SEQUENCE [MRNA]</scope>
</reference>
<reference key="4">
    <citation type="submission" date="2008-04" db="EMBL/GenBank/DDBJ databases">
        <authorList>
            <consortium name="NIH - Zebrafish Gene Collection (ZGC) project"/>
        </authorList>
    </citation>
    <scope>NUCLEOTIDE SEQUENCE [LARGE SCALE MRNA]</scope>
</reference>
<sequence length="91" mass="10517">MKLSNVFLAAVVILTCVCVFQITAVPFIQQVQDEHHVESEELQENQHLTEAEHRLTDPLVLFRTKRQSHLSLCRFCCKCCRNKGCGYCCKF</sequence>
<gene>
    <name type="primary">hamp2</name>
    <name type="synonym">hamp</name>
</gene>
<name>HEPC2_DANRE</name>
<protein>
    <recommendedName>
        <fullName>Hepcidin-2</fullName>
    </recommendedName>
</protein>
<evidence type="ECO:0000250" key="1"/>
<evidence type="ECO:0000255" key="2"/>
<evidence type="ECO:0000305" key="3"/>